<name>DEOD_LISW6</name>
<reference key="1">
    <citation type="journal article" date="2006" name="J. Bacteriol.">
        <title>Whole-genome sequence of Listeria welshimeri reveals common steps in genome reduction with Listeria innocua as compared to Listeria monocytogenes.</title>
        <authorList>
            <person name="Hain T."/>
            <person name="Steinweg C."/>
            <person name="Kuenne C.T."/>
            <person name="Billion A."/>
            <person name="Ghai R."/>
            <person name="Chatterjee S.S."/>
            <person name="Domann E."/>
            <person name="Kaerst U."/>
            <person name="Goesmann A."/>
            <person name="Bekel T."/>
            <person name="Bartels D."/>
            <person name="Kaiser O."/>
            <person name="Meyer F."/>
            <person name="Puehler A."/>
            <person name="Weisshaar B."/>
            <person name="Wehland J."/>
            <person name="Liang C."/>
            <person name="Dandekar T."/>
            <person name="Lampidis R."/>
            <person name="Kreft J."/>
            <person name="Goebel W."/>
            <person name="Chakraborty T."/>
        </authorList>
    </citation>
    <scope>NUCLEOTIDE SEQUENCE [LARGE SCALE GENOMIC DNA]</scope>
    <source>
        <strain>ATCC 35897 / DSM 20650 / CCUG 15529 / CIP 8149 / NCTC 11857 / SLCC 5334 / V8</strain>
    </source>
</reference>
<keyword id="KW-0328">Glycosyltransferase</keyword>
<keyword id="KW-0808">Transferase</keyword>
<accession>A0AJW1</accession>
<protein>
    <recommendedName>
        <fullName evidence="2">Purine nucleoside phosphorylase DeoD-type</fullName>
        <shortName evidence="2">PNP</shortName>
        <ecNumber evidence="2">2.4.2.1</ecNumber>
    </recommendedName>
</protein>
<dbReference type="EC" id="2.4.2.1" evidence="2"/>
<dbReference type="EMBL" id="AM263198">
    <property type="protein sequence ID" value="CAK21293.1"/>
    <property type="molecule type" value="Genomic_DNA"/>
</dbReference>
<dbReference type="RefSeq" id="WP_003767481.1">
    <property type="nucleotide sequence ID" value="NC_008555.1"/>
</dbReference>
<dbReference type="SMR" id="A0AJW1"/>
<dbReference type="STRING" id="386043.lwe1875"/>
<dbReference type="GeneID" id="61189776"/>
<dbReference type="GeneID" id="93235308"/>
<dbReference type="KEGG" id="lwe:lwe1875"/>
<dbReference type="eggNOG" id="COG0813">
    <property type="taxonomic scope" value="Bacteria"/>
</dbReference>
<dbReference type="HOGENOM" id="CLU_068457_2_0_9"/>
<dbReference type="OrthoDB" id="9782889at2"/>
<dbReference type="Proteomes" id="UP000000779">
    <property type="component" value="Chromosome"/>
</dbReference>
<dbReference type="GO" id="GO:0005829">
    <property type="term" value="C:cytosol"/>
    <property type="evidence" value="ECO:0007669"/>
    <property type="project" value="TreeGrafter"/>
</dbReference>
<dbReference type="GO" id="GO:0004731">
    <property type="term" value="F:purine-nucleoside phosphorylase activity"/>
    <property type="evidence" value="ECO:0007669"/>
    <property type="project" value="UniProtKB-UniRule"/>
</dbReference>
<dbReference type="GO" id="GO:0006152">
    <property type="term" value="P:purine nucleoside catabolic process"/>
    <property type="evidence" value="ECO:0007669"/>
    <property type="project" value="TreeGrafter"/>
</dbReference>
<dbReference type="CDD" id="cd09006">
    <property type="entry name" value="PNP_EcPNPI-like"/>
    <property type="match status" value="1"/>
</dbReference>
<dbReference type="Gene3D" id="3.40.50.1580">
    <property type="entry name" value="Nucleoside phosphorylase domain"/>
    <property type="match status" value="1"/>
</dbReference>
<dbReference type="HAMAP" id="MF_01627">
    <property type="entry name" value="Pur_nucleosid_phosp"/>
    <property type="match status" value="1"/>
</dbReference>
<dbReference type="InterPro" id="IPR004402">
    <property type="entry name" value="DeoD-type"/>
</dbReference>
<dbReference type="InterPro" id="IPR018016">
    <property type="entry name" value="Nucleoside_phosphorylase_CS"/>
</dbReference>
<dbReference type="InterPro" id="IPR000845">
    <property type="entry name" value="Nucleoside_phosphorylase_d"/>
</dbReference>
<dbReference type="InterPro" id="IPR035994">
    <property type="entry name" value="Nucleoside_phosphorylase_sf"/>
</dbReference>
<dbReference type="NCBIfam" id="TIGR00107">
    <property type="entry name" value="deoD"/>
    <property type="match status" value="1"/>
</dbReference>
<dbReference type="NCBIfam" id="NF004489">
    <property type="entry name" value="PRK05819.1"/>
    <property type="match status" value="1"/>
</dbReference>
<dbReference type="NCBIfam" id="NF009914">
    <property type="entry name" value="PRK13374.1"/>
    <property type="match status" value="1"/>
</dbReference>
<dbReference type="PANTHER" id="PTHR43691:SF11">
    <property type="entry name" value="FI09636P-RELATED"/>
    <property type="match status" value="1"/>
</dbReference>
<dbReference type="PANTHER" id="PTHR43691">
    <property type="entry name" value="URIDINE PHOSPHORYLASE"/>
    <property type="match status" value="1"/>
</dbReference>
<dbReference type="Pfam" id="PF01048">
    <property type="entry name" value="PNP_UDP_1"/>
    <property type="match status" value="1"/>
</dbReference>
<dbReference type="SUPFAM" id="SSF53167">
    <property type="entry name" value="Purine and uridine phosphorylases"/>
    <property type="match status" value="1"/>
</dbReference>
<dbReference type="PROSITE" id="PS01232">
    <property type="entry name" value="PNP_UDP_1"/>
    <property type="match status" value="1"/>
</dbReference>
<feature type="chain" id="PRO_1000069637" description="Purine nucleoside phosphorylase DeoD-type">
    <location>
        <begin position="1"/>
        <end position="233"/>
    </location>
</feature>
<feature type="active site" description="Proton donor" evidence="2">
    <location>
        <position position="203"/>
    </location>
</feature>
<feature type="binding site" evidence="1">
    <location>
        <position position="4"/>
    </location>
    <ligand>
        <name>a purine D-ribonucleoside</name>
        <dbReference type="ChEBI" id="CHEBI:142355"/>
        <note>ligand shared between dimeric partners</note>
    </ligand>
</feature>
<feature type="binding site" description="in other chain" evidence="1">
    <location>
        <position position="20"/>
    </location>
    <ligand>
        <name>phosphate</name>
        <dbReference type="ChEBI" id="CHEBI:43474"/>
        <note>ligand shared between dimeric partners</note>
    </ligand>
</feature>
<feature type="binding site" description="in other chain" evidence="1">
    <location>
        <position position="24"/>
    </location>
    <ligand>
        <name>phosphate</name>
        <dbReference type="ChEBI" id="CHEBI:43474"/>
        <note>ligand shared between dimeric partners</note>
    </ligand>
</feature>
<feature type="binding site" evidence="1">
    <location>
        <position position="43"/>
    </location>
    <ligand>
        <name>phosphate</name>
        <dbReference type="ChEBI" id="CHEBI:43474"/>
        <note>ligand shared between dimeric partners</note>
    </ligand>
</feature>
<feature type="binding site" description="in other chain" evidence="1">
    <location>
        <begin position="87"/>
        <end position="90"/>
    </location>
    <ligand>
        <name>phosphate</name>
        <dbReference type="ChEBI" id="CHEBI:43474"/>
        <note>ligand shared between dimeric partners</note>
    </ligand>
</feature>
<feature type="binding site" description="in other chain" evidence="1">
    <location>
        <begin position="178"/>
        <end position="180"/>
    </location>
    <ligand>
        <name>a purine D-ribonucleoside</name>
        <dbReference type="ChEBI" id="CHEBI:142355"/>
        <note>ligand shared between dimeric partners</note>
    </ligand>
</feature>
<feature type="binding site" description="in other chain" evidence="1">
    <location>
        <begin position="202"/>
        <end position="203"/>
    </location>
    <ligand>
        <name>a purine D-ribonucleoside</name>
        <dbReference type="ChEBI" id="CHEBI:142355"/>
        <note>ligand shared between dimeric partners</note>
    </ligand>
</feature>
<feature type="site" description="Important for catalytic activity" evidence="2">
    <location>
        <position position="216"/>
    </location>
</feature>
<gene>
    <name evidence="2" type="primary">deoD</name>
    <name type="ordered locus">lwe1875</name>
</gene>
<comment type="function">
    <text evidence="2">Catalyzes the reversible phosphorolytic breakdown of the N-glycosidic bond in the beta-(deoxy)ribonucleoside molecules, with the formation of the corresponding free purine bases and pentose-1-phosphate.</text>
</comment>
<comment type="catalytic activity">
    <reaction evidence="2">
        <text>a purine D-ribonucleoside + phosphate = a purine nucleobase + alpha-D-ribose 1-phosphate</text>
        <dbReference type="Rhea" id="RHEA:19805"/>
        <dbReference type="ChEBI" id="CHEBI:26386"/>
        <dbReference type="ChEBI" id="CHEBI:43474"/>
        <dbReference type="ChEBI" id="CHEBI:57720"/>
        <dbReference type="ChEBI" id="CHEBI:142355"/>
        <dbReference type="EC" id="2.4.2.1"/>
    </reaction>
</comment>
<comment type="catalytic activity">
    <reaction evidence="2">
        <text>a purine 2'-deoxy-D-ribonucleoside + phosphate = a purine nucleobase + 2-deoxy-alpha-D-ribose 1-phosphate</text>
        <dbReference type="Rhea" id="RHEA:36431"/>
        <dbReference type="ChEBI" id="CHEBI:26386"/>
        <dbReference type="ChEBI" id="CHEBI:43474"/>
        <dbReference type="ChEBI" id="CHEBI:57259"/>
        <dbReference type="ChEBI" id="CHEBI:142361"/>
        <dbReference type="EC" id="2.4.2.1"/>
    </reaction>
</comment>
<comment type="subunit">
    <text evidence="2">Homohexamer; trimer of homodimers.</text>
</comment>
<comment type="similarity">
    <text evidence="2">Belongs to the PNP/UDP phosphorylase family.</text>
</comment>
<evidence type="ECO:0000250" key="1">
    <source>
        <dbReference type="UniProtKB" id="P50389"/>
    </source>
</evidence>
<evidence type="ECO:0000255" key="2">
    <source>
        <dbReference type="HAMAP-Rule" id="MF_01627"/>
    </source>
</evidence>
<proteinExistence type="inferred from homology"/>
<organism>
    <name type="scientific">Listeria welshimeri serovar 6b (strain ATCC 35897 / DSM 20650 / CCUG 15529 / CIP 8149 / NCTC 11857 / SLCC 5334 / V8)</name>
    <dbReference type="NCBI Taxonomy" id="386043"/>
    <lineage>
        <taxon>Bacteria</taxon>
        <taxon>Bacillati</taxon>
        <taxon>Bacillota</taxon>
        <taxon>Bacilli</taxon>
        <taxon>Bacillales</taxon>
        <taxon>Listeriaceae</taxon>
        <taxon>Listeria</taxon>
    </lineage>
</organism>
<sequence>MSVHIEAKQGEIAETILLPGDPLRAKYIAETFLEDVVLFNQVRGMLGFTGTYKGEKVSVMGTGMGIPSISIYVNELIQSYDVKNLIRVGTMGGIQADVKVRDVVIAQAASTDSQINRNTFAGVDFAPVADFSLLKKAYDAGVEKGLSLKVGNVFSADRFYNDQLDKQQLADYGVLGIEMEAAALYTLAQKYGRRALAILTVSDHIFTGEETSAEERQTTFNDMIVVALEAAIK</sequence>